<name>PER_DROOR</name>
<dbReference type="EMBL" id="S53307">
    <property type="protein sequence ID" value="AAB25032.2"/>
    <property type="molecule type" value="Genomic_DNA"/>
</dbReference>
<dbReference type="GO" id="GO:0005634">
    <property type="term" value="C:nucleus"/>
    <property type="evidence" value="ECO:0007669"/>
    <property type="project" value="UniProtKB-SubCell"/>
</dbReference>
<dbReference type="GO" id="GO:0048471">
    <property type="term" value="C:perinuclear region of cytoplasm"/>
    <property type="evidence" value="ECO:0007669"/>
    <property type="project" value="UniProtKB-SubCell"/>
</dbReference>
<dbReference type="GO" id="GO:0048511">
    <property type="term" value="P:rhythmic process"/>
    <property type="evidence" value="ECO:0007669"/>
    <property type="project" value="UniProtKB-KW"/>
</dbReference>
<organism>
    <name type="scientific">Drosophila orena</name>
    <name type="common">Fruit fly</name>
    <dbReference type="NCBI Taxonomy" id="7233"/>
    <lineage>
        <taxon>Eukaryota</taxon>
        <taxon>Metazoa</taxon>
        <taxon>Ecdysozoa</taxon>
        <taxon>Arthropoda</taxon>
        <taxon>Hexapoda</taxon>
        <taxon>Insecta</taxon>
        <taxon>Pterygota</taxon>
        <taxon>Neoptera</taxon>
        <taxon>Endopterygota</taxon>
        <taxon>Diptera</taxon>
        <taxon>Brachycera</taxon>
        <taxon>Muscomorpha</taxon>
        <taxon>Ephydroidea</taxon>
        <taxon>Drosophilidae</taxon>
        <taxon>Drosophila</taxon>
        <taxon>Sophophora</taxon>
    </lineage>
</organism>
<proteinExistence type="inferred from homology"/>
<protein>
    <recommendedName>
        <fullName>Period circadian protein</fullName>
    </recommendedName>
</protein>
<feature type="chain" id="PRO_0000162600" description="Period circadian protein">
    <location>
        <begin position="1" status="less than"/>
        <end position="114" status="greater than"/>
    </location>
</feature>
<feature type="repeat" description="1">
    <location>
        <begin position="30"/>
        <end position="31"/>
    </location>
</feature>
<feature type="repeat" description="2">
    <location>
        <begin position="33"/>
        <end position="34"/>
    </location>
</feature>
<feature type="repeat" description="3">
    <location>
        <begin position="36"/>
        <end position="37"/>
    </location>
</feature>
<feature type="repeat" description="4">
    <location>
        <begin position="38"/>
        <end position="39"/>
    </location>
</feature>
<feature type="repeat" description="5">
    <location>
        <begin position="40"/>
        <end position="41"/>
    </location>
</feature>
<feature type="repeat" description="6">
    <location>
        <begin position="42"/>
        <end position="43"/>
    </location>
</feature>
<feature type="repeat" description="7">
    <location>
        <begin position="44"/>
        <end position="45"/>
    </location>
</feature>
<feature type="repeat" description="8">
    <location>
        <begin position="46"/>
        <end position="47"/>
    </location>
</feature>
<feature type="repeat" description="9">
    <location>
        <begin position="48"/>
        <end position="49"/>
    </location>
</feature>
<feature type="repeat" description="10">
    <location>
        <begin position="50"/>
        <end position="51"/>
    </location>
</feature>
<feature type="repeat" description="11">
    <location>
        <begin position="52"/>
        <end position="53"/>
    </location>
</feature>
<feature type="repeat" description="12">
    <location>
        <begin position="54"/>
        <end position="55"/>
    </location>
</feature>
<feature type="repeat" description="13">
    <location>
        <begin position="56"/>
        <end position="57"/>
    </location>
</feature>
<feature type="repeat" description="14">
    <location>
        <begin position="58"/>
        <end position="59"/>
    </location>
</feature>
<feature type="repeat" description="15; approximate">
    <location>
        <begin position="60"/>
        <end position="61"/>
    </location>
</feature>
<feature type="repeat" description="16">
    <location>
        <begin position="62"/>
        <end position="63"/>
    </location>
</feature>
<feature type="repeat" description="17">
    <location>
        <begin position="64"/>
        <end position="65"/>
    </location>
</feature>
<feature type="repeat" description="18">
    <location>
        <begin position="66"/>
        <end position="67"/>
    </location>
</feature>
<feature type="repeat" description="19">
    <location>
        <begin position="68"/>
        <end position="69"/>
    </location>
</feature>
<feature type="repeat" description="20; approximate">
    <location>
        <begin position="70"/>
        <end position="71"/>
    </location>
</feature>
<feature type="repeat" description="21">
    <location>
        <begin position="72"/>
        <end position="73"/>
    </location>
</feature>
<feature type="repeat" description="22">
    <location>
        <begin position="74"/>
        <end position="75"/>
    </location>
</feature>
<feature type="repeat" description="23">
    <location>
        <begin position="76"/>
        <end position="77"/>
    </location>
</feature>
<feature type="repeat" description="24">
    <location>
        <begin position="78"/>
        <end position="79"/>
    </location>
</feature>
<feature type="repeat" description="25; approximate">
    <location>
        <begin position="80"/>
        <end position="81"/>
    </location>
</feature>
<feature type="repeat" description="26">
    <location>
        <begin position="82"/>
        <end position="83"/>
    </location>
</feature>
<feature type="repeat" description="27; approximate">
    <location>
        <begin position="84"/>
        <end position="85"/>
    </location>
</feature>
<feature type="repeat" description="28">
    <location>
        <begin position="86"/>
        <end position="87"/>
    </location>
</feature>
<feature type="region of interest" description="Disordered" evidence="2">
    <location>
        <begin position="23"/>
        <end position="114"/>
    </location>
</feature>
<feature type="region of interest" description="28 X 2 AA approximate tandem repeats of G-[TN]">
    <location>
        <begin position="30"/>
        <end position="87"/>
    </location>
</feature>
<feature type="compositionally biased region" description="Gly residues" evidence="2">
    <location>
        <begin position="30"/>
        <end position="79"/>
    </location>
</feature>
<feature type="compositionally biased region" description="Low complexity" evidence="2">
    <location>
        <begin position="80"/>
        <end position="91"/>
    </location>
</feature>
<feature type="compositionally biased region" description="Polar residues" evidence="2">
    <location>
        <begin position="105"/>
        <end position="114"/>
    </location>
</feature>
<feature type="non-terminal residue">
    <location>
        <position position="1"/>
    </location>
</feature>
<feature type="non-terminal residue">
    <location>
        <position position="114"/>
    </location>
</feature>
<gene>
    <name type="primary">per</name>
</gene>
<sequence>GGSGGSGSSGNFTTASNIHMSSVTNTSIAGTGGTGGTGTGTGTGTGTGTGTGTGTGTGTDTGTGTGTGTETGTGTGTGTRNGTNSGTKTGTASSYRGGGVAIQPVTLTESLLNK</sequence>
<accession>Q26289</accession>
<comment type="function">
    <text evidence="1">Essential for biological clock functions. Determines the period length of circadian and ultradian rhythms; an increase in PER dosage leads to shortened circadian rhythms and a decrease leads to lengthened circadian rhythms. Essential for the circadian rhythmicity of locomotor activity, eclosion behavior, and for the rhythmic component of the male courtship song that originates in the thoracic nervous system. The biological cycle depends on the rhythmic formation and nuclear localization of the TIM-PER complex. Light induces the degradation of TIM, which promotes elimination of PER. Nuclear activity of the heterodimer coordinatively regulates PER and TIM transcription through a negative feedback loop. Behaves as a negative element in circadian transcriptional loop. Does not appear to bind DNA, suggesting indirect transcriptional inhibition (By similarity).</text>
</comment>
<comment type="subunit">
    <text evidence="1">Forms a heterodimer with timeless (TIM); the complex then translocates into the nucleus.</text>
</comment>
<comment type="subcellular location">
    <subcellularLocation>
        <location evidence="1">Nucleus</location>
    </subcellularLocation>
    <subcellularLocation>
        <location evidence="1">Cytoplasm</location>
        <location evidence="1">Perinuclear region</location>
    </subcellularLocation>
    <text evidence="1">Nuclear at specific periods of the day. First accumulates in the perinuclear region about one hour before translocation into the nucleus. Interaction with Tim is required for nuclear localization (By similarity).</text>
</comment>
<comment type="domain">
    <text evidence="1">The run of Gly-Thr is implicated in the maintenance of circadian period at different temperatures. Deletion of the repeat leads to a shortening of the courtship song cycle period, and thus could be important for determining features of species-specific mating behavior (By similarity).</text>
</comment>
<comment type="PTM">
    <text evidence="1">Phosphorylated with a circadian rhythmicity, probably by the double-time protein (dbt). Phosphorylation could be implicated in the stability of per monomer and in the formation of heterodimer per-tim (By similarity).</text>
</comment>
<evidence type="ECO:0000250" key="1"/>
<evidence type="ECO:0000256" key="2">
    <source>
        <dbReference type="SAM" id="MobiDB-lite"/>
    </source>
</evidence>
<keyword id="KW-0090">Biological rhythms</keyword>
<keyword id="KW-0963">Cytoplasm</keyword>
<keyword id="KW-0539">Nucleus</keyword>
<keyword id="KW-0597">Phosphoprotein</keyword>
<keyword id="KW-0677">Repeat</keyword>
<reference key="1">
    <citation type="journal article" date="1992" name="J. Mol. Evol.">
        <title>Evolution of the threonine-glycine repeat region of the period gene in the melanogaster species subgroup of Drosophila.</title>
        <authorList>
            <person name="Peixoto A.A."/>
            <person name="Costa R."/>
            <person name="Wheeler D.A."/>
            <person name="Hall J.C."/>
            <person name="Kyriacou C.P."/>
        </authorList>
    </citation>
    <scope>NUCLEOTIDE SEQUENCE [GENOMIC DNA]</scope>
</reference>